<evidence type="ECO:0000255" key="1">
    <source>
        <dbReference type="HAMAP-Rule" id="MF_00808"/>
    </source>
</evidence>
<proteinExistence type="inferred from homology"/>
<feature type="chain" id="PRO_0000217996" description="Photosystem II reaction center protein T">
    <location>
        <begin position="1"/>
        <end position="38"/>
    </location>
</feature>
<feature type="transmembrane region" description="Helical" evidence="1">
    <location>
        <begin position="3"/>
        <end position="23"/>
    </location>
</feature>
<keyword id="KW-0150">Chloroplast</keyword>
<keyword id="KW-0472">Membrane</keyword>
<keyword id="KW-0602">Photosynthesis</keyword>
<keyword id="KW-0604">Photosystem II</keyword>
<keyword id="KW-0934">Plastid</keyword>
<keyword id="KW-1185">Reference proteome</keyword>
<keyword id="KW-0793">Thylakoid</keyword>
<keyword id="KW-0812">Transmembrane</keyword>
<keyword id="KW-1133">Transmembrane helix</keyword>
<reference key="1">
    <citation type="journal article" date="1991" name="Curr. Genet.">
        <title>Differential expression of the psbB and psbH genes encoding the 47 kDa chlorophyll a-protein and the 10 kDa phosphoprotein of photosystem II during chloroplast development in wheat.</title>
        <authorList>
            <person name="Hird S.M."/>
            <person name="Webber A.N."/>
            <person name="Wilson R.J."/>
            <person name="Dyer T.A."/>
            <person name="Gray J.C."/>
        </authorList>
    </citation>
    <scope>NUCLEOTIDE SEQUENCE [GENOMIC DNA]</scope>
    <source>
        <strain>cv. Mardler</strain>
    </source>
</reference>
<reference key="2">
    <citation type="journal article" date="2000" name="Plant Mol. Biol. Rep.">
        <title>Chinese spring wheat (Triticum aestivum L.) chloroplast genome: complete sequence and contig clones.</title>
        <authorList>
            <person name="Ogihara Y."/>
            <person name="Isono K."/>
            <person name="Kojima T."/>
            <person name="Endo A."/>
            <person name="Hanaoka M."/>
            <person name="Shiina T."/>
            <person name="Terachi T."/>
            <person name="Utsugi S."/>
            <person name="Murata M."/>
            <person name="Mori N."/>
            <person name="Takumi S."/>
            <person name="Ikeo K."/>
            <person name="Gojobori T."/>
            <person name="Murai R."/>
            <person name="Murai K."/>
            <person name="Matsuoka Y."/>
            <person name="Ohnishi Y."/>
            <person name="Tajiri H."/>
            <person name="Tsunewaki K."/>
        </authorList>
    </citation>
    <scope>NUCLEOTIDE SEQUENCE [LARGE SCALE GENOMIC DNA]</scope>
    <source>
        <strain>cv. Chinese Spring</strain>
    </source>
</reference>
<gene>
    <name evidence="1" type="primary">psbT</name>
    <name type="synonym">ycf8</name>
</gene>
<accession>P69677</accession>
<accession>P37260</accession>
<geneLocation type="chloroplast"/>
<name>PSBT_WHEAT</name>
<protein>
    <recommendedName>
        <fullName evidence="1">Photosystem II reaction center protein T</fullName>
        <shortName evidence="1">PSII-T</shortName>
    </recommendedName>
</protein>
<organism>
    <name type="scientific">Triticum aestivum</name>
    <name type="common">Wheat</name>
    <dbReference type="NCBI Taxonomy" id="4565"/>
    <lineage>
        <taxon>Eukaryota</taxon>
        <taxon>Viridiplantae</taxon>
        <taxon>Streptophyta</taxon>
        <taxon>Embryophyta</taxon>
        <taxon>Tracheophyta</taxon>
        <taxon>Spermatophyta</taxon>
        <taxon>Magnoliopsida</taxon>
        <taxon>Liliopsida</taxon>
        <taxon>Poales</taxon>
        <taxon>Poaceae</taxon>
        <taxon>BOP clade</taxon>
        <taxon>Pooideae</taxon>
        <taxon>Triticodae</taxon>
        <taxon>Triticeae</taxon>
        <taxon>Triticinae</taxon>
        <taxon>Triticum</taxon>
    </lineage>
</organism>
<sequence length="38" mass="4382">MEALVYTFLLVSTLGIIFFAIFFREPPKVPPTPTKRIK</sequence>
<dbReference type="EMBL" id="X54749">
    <property type="protein sequence ID" value="CAA38542.1"/>
    <property type="molecule type" value="Genomic_DNA"/>
</dbReference>
<dbReference type="EMBL" id="AB042240">
    <property type="protein sequence ID" value="BAB47060.1"/>
    <property type="molecule type" value="Genomic_DNA"/>
</dbReference>
<dbReference type="PIR" id="S14141">
    <property type="entry name" value="S14141"/>
</dbReference>
<dbReference type="RefSeq" id="NP_114284.1">
    <property type="nucleotide sequence ID" value="NC_002762.1"/>
</dbReference>
<dbReference type="SMR" id="P69677"/>
<dbReference type="STRING" id="4565.P69677"/>
<dbReference type="PaxDb" id="4565-EPlTAEP00000010019"/>
<dbReference type="EnsemblPlants" id="TraesCLE_scaffold_774486_01G000200.1">
    <property type="protein sequence ID" value="TraesCLE_scaffold_774486_01G000200.1"/>
    <property type="gene ID" value="TraesCLE_scaffold_774486_01G000200"/>
</dbReference>
<dbReference type="EnsemblPlants" id="TraesCS3D02G053500.1">
    <property type="protein sequence ID" value="TraesCS3D02G053500.1.cds1"/>
    <property type="gene ID" value="TraesCS3D02G053500"/>
</dbReference>
<dbReference type="EnsemblPlants" id="TraesCS3D03G0098500.1">
    <property type="protein sequence ID" value="TraesCS3D03G0098500.1.CDS1"/>
    <property type="gene ID" value="TraesCS3D03G0098500"/>
</dbReference>
<dbReference type="EnsemblPlants" id="TraesCS5D03G1229700.1">
    <property type="protein sequence ID" value="TraesCS5D03G1229700.1.CDS1"/>
    <property type="gene ID" value="TraesCS5D03G1229700"/>
</dbReference>
<dbReference type="EnsemblPlants" id="TraesCS7B02G046600.1">
    <property type="protein sequence ID" value="TraesCS7B02G046600.1.cds1"/>
    <property type="gene ID" value="TraesCS7B02G046600"/>
</dbReference>
<dbReference type="EnsemblPlants" id="TraesJAG3D03G01819560.1">
    <property type="protein sequence ID" value="TraesJAG3D03G01819560.1.CDS1"/>
    <property type="gene ID" value="TraesJAG3D03G01819560"/>
</dbReference>
<dbReference type="EnsemblPlants" id="TraesLAC3D03G01751640.1">
    <property type="protein sequence ID" value="TraesLAC3D03G01751640.1.CDS1"/>
    <property type="gene ID" value="TraesLAC3D03G01751640"/>
</dbReference>
<dbReference type="EnsemblPlants" id="TraesMAC2B03G00857470.1">
    <property type="protein sequence ID" value="TraesMAC2B03G00857470.1.CDS1"/>
    <property type="gene ID" value="TraesMAC2B03G00857470"/>
</dbReference>
<dbReference type="EnsemblPlants" id="TraesMAC3D03G01808540.1">
    <property type="protein sequence ID" value="TraesMAC3D03G01808540.1.CDS1"/>
    <property type="gene ID" value="TraesMAC3D03G01808540"/>
</dbReference>
<dbReference type="EnsemblPlants" id="TraesNOR3D03G01837090.1">
    <property type="protein sequence ID" value="TraesNOR3D03G01837090.1.CDS1"/>
    <property type="gene ID" value="TraesNOR3D03G01837090"/>
</dbReference>
<dbReference type="EnsemblPlants" id="TraesPARA_EIv1.0_0757270.1">
    <property type="protein sequence ID" value="TraesPARA_EIv1.0_0757270.1.CDS1"/>
    <property type="gene ID" value="TraesPARA_EIv1.0_0757270"/>
</dbReference>
<dbReference type="EnsemblPlants" id="TraesPARA_EIv1.0_2054890.1">
    <property type="protein sequence ID" value="TraesPARA_EIv1.0_2054890.1.CDS1"/>
    <property type="gene ID" value="TraesPARA_EIv1.0_2054890"/>
</dbReference>
<dbReference type="EnsemblPlants" id="TraesPARA_EIv1.0_2644810.1">
    <property type="protein sequence ID" value="TraesPARA_EIv1.0_2644810.1.CDS1"/>
    <property type="gene ID" value="TraesPARA_EIv1.0_2644810"/>
</dbReference>
<dbReference type="EnsemblPlants" id="TraesRN1A0100364200.1">
    <property type="protein sequence ID" value="TraesRN1A0100364200.1"/>
    <property type="gene ID" value="TraesRN1A0100364200"/>
</dbReference>
<dbReference type="EnsemblPlants" id="TraesRN1A0100364300.1">
    <property type="protein sequence ID" value="TraesRN1A0100364300.1"/>
    <property type="gene ID" value="TraesRN1A0100364300"/>
</dbReference>
<dbReference type="EnsemblPlants" id="TraesRN1D0100468200.1">
    <property type="protein sequence ID" value="TraesRN1D0100468200.1"/>
    <property type="gene ID" value="TraesRN1D0100468200"/>
</dbReference>
<dbReference type="EnsemblPlants" id="TraesRN1D0100602200.1">
    <property type="protein sequence ID" value="TraesRN1D0100602200.1"/>
    <property type="gene ID" value="TraesRN1D0100602200"/>
</dbReference>
<dbReference type="EnsemblPlants" id="TraesRN3D0100108300.1">
    <property type="protein sequence ID" value="TraesRN3D0100108300.1"/>
    <property type="gene ID" value="TraesRN3D0100108300"/>
</dbReference>
<dbReference type="EnsemblPlants" id="TraesRN5D0100539400.1">
    <property type="protein sequence ID" value="TraesRN5D0100539400.1"/>
    <property type="gene ID" value="TraesRN5D0100539400"/>
</dbReference>
<dbReference type="EnsemblPlants" id="TraesRN6B0100075600.1">
    <property type="protein sequence ID" value="TraesRN6B0100075600.1"/>
    <property type="gene ID" value="TraesRN6B0100075600"/>
</dbReference>
<dbReference type="EnsemblPlants" id="TraesSTA3B03G01599290.1">
    <property type="protein sequence ID" value="TraesSTA3B03G01599290.1.CDS1"/>
    <property type="gene ID" value="TraesSTA3B03G01599290"/>
</dbReference>
<dbReference type="EnsemblPlants" id="TraesSTA3D03G01805010.1">
    <property type="protein sequence ID" value="TraesSTA3D03G01805010.1.CDS1"/>
    <property type="gene ID" value="TraesSTA3D03G01805010"/>
</dbReference>
<dbReference type="GeneID" id="803143"/>
<dbReference type="Gramene" id="TraesCLE_scaffold_774486_01G000200.1">
    <property type="protein sequence ID" value="TraesCLE_scaffold_774486_01G000200.1"/>
    <property type="gene ID" value="TraesCLE_scaffold_774486_01G000200"/>
</dbReference>
<dbReference type="Gramene" id="TraesCS3D02G053500.1">
    <property type="protein sequence ID" value="TraesCS3D02G053500.1.cds1"/>
    <property type="gene ID" value="TraesCS3D02G053500"/>
</dbReference>
<dbReference type="Gramene" id="TraesCS3D03G0098500.1">
    <property type="protein sequence ID" value="TraesCS3D03G0098500.1.CDS1"/>
    <property type="gene ID" value="TraesCS3D03G0098500"/>
</dbReference>
<dbReference type="Gramene" id="TraesCS5D03G1229700.1">
    <property type="protein sequence ID" value="TraesCS5D03G1229700.1.CDS1"/>
    <property type="gene ID" value="TraesCS5D03G1229700"/>
</dbReference>
<dbReference type="Gramene" id="TraesCS7B02G046600.1">
    <property type="protein sequence ID" value="TraesCS7B02G046600.1.cds1"/>
    <property type="gene ID" value="TraesCS7B02G046600"/>
</dbReference>
<dbReference type="Gramene" id="TraesJAG3D03G01819560.1">
    <property type="protein sequence ID" value="TraesJAG3D03G01819560.1.CDS1"/>
    <property type="gene ID" value="TraesJAG3D03G01819560"/>
</dbReference>
<dbReference type="Gramene" id="TraesLAC3D03G01751640.1">
    <property type="protein sequence ID" value="TraesLAC3D03G01751640.1.CDS1"/>
    <property type="gene ID" value="TraesLAC3D03G01751640"/>
</dbReference>
<dbReference type="Gramene" id="TraesMAC2B03G00857470.1">
    <property type="protein sequence ID" value="TraesMAC2B03G00857470.1.CDS1"/>
    <property type="gene ID" value="TraesMAC2B03G00857470"/>
</dbReference>
<dbReference type="Gramene" id="TraesMAC3D03G01808540.1">
    <property type="protein sequence ID" value="TraesMAC3D03G01808540.1.CDS1"/>
    <property type="gene ID" value="TraesMAC3D03G01808540"/>
</dbReference>
<dbReference type="Gramene" id="TraesNOR3D03G01837090.1">
    <property type="protein sequence ID" value="TraesNOR3D03G01837090.1.CDS1"/>
    <property type="gene ID" value="TraesNOR3D03G01837090"/>
</dbReference>
<dbReference type="Gramene" id="TraesPARA_EIv1.0_0757270.1">
    <property type="protein sequence ID" value="TraesPARA_EIv1.0_0757270.1.CDS1"/>
    <property type="gene ID" value="TraesPARA_EIv1.0_0757270"/>
</dbReference>
<dbReference type="Gramene" id="TraesPARA_EIv1.0_2054890.1">
    <property type="protein sequence ID" value="TraesPARA_EIv1.0_2054890.1.CDS1"/>
    <property type="gene ID" value="TraesPARA_EIv1.0_2054890"/>
</dbReference>
<dbReference type="Gramene" id="TraesPARA_EIv1.0_2644810.1">
    <property type="protein sequence ID" value="TraesPARA_EIv1.0_2644810.1.CDS1"/>
    <property type="gene ID" value="TraesPARA_EIv1.0_2644810"/>
</dbReference>
<dbReference type="Gramene" id="TraesRN1A0100364200.1">
    <property type="protein sequence ID" value="TraesRN1A0100364200.1"/>
    <property type="gene ID" value="TraesRN1A0100364200"/>
</dbReference>
<dbReference type="Gramene" id="TraesRN1A0100364300.1">
    <property type="protein sequence ID" value="TraesRN1A0100364300.1"/>
    <property type="gene ID" value="TraesRN1A0100364300"/>
</dbReference>
<dbReference type="Gramene" id="TraesRN1D0100468200.1">
    <property type="protein sequence ID" value="TraesRN1D0100468200.1"/>
    <property type="gene ID" value="TraesRN1D0100468200"/>
</dbReference>
<dbReference type="Gramene" id="TraesRN1D0100602200.1">
    <property type="protein sequence ID" value="TraesRN1D0100602200.1"/>
    <property type="gene ID" value="TraesRN1D0100602200"/>
</dbReference>
<dbReference type="Gramene" id="TraesRN3D0100108300.1">
    <property type="protein sequence ID" value="TraesRN3D0100108300.1"/>
    <property type="gene ID" value="TraesRN3D0100108300"/>
</dbReference>
<dbReference type="Gramene" id="TraesRN5D0100539400.1">
    <property type="protein sequence ID" value="TraesRN5D0100539400.1"/>
    <property type="gene ID" value="TraesRN5D0100539400"/>
</dbReference>
<dbReference type="Gramene" id="TraesRN6B0100075600.1">
    <property type="protein sequence ID" value="TraesRN6B0100075600.1"/>
    <property type="gene ID" value="TraesRN6B0100075600"/>
</dbReference>
<dbReference type="Gramene" id="TraesSTA3B03G01599290.1">
    <property type="protein sequence ID" value="TraesSTA3B03G01599290.1.CDS1"/>
    <property type="gene ID" value="TraesSTA3B03G01599290"/>
</dbReference>
<dbReference type="Gramene" id="TraesSTA3D03G01805010.1">
    <property type="protein sequence ID" value="TraesSTA3D03G01805010.1.CDS1"/>
    <property type="gene ID" value="TraesSTA3D03G01805010"/>
</dbReference>
<dbReference type="KEGG" id="taes:803143"/>
<dbReference type="eggNOG" id="ENOG502SCPW">
    <property type="taxonomic scope" value="Eukaryota"/>
</dbReference>
<dbReference type="HOGENOM" id="CLU_217078_0_0_1"/>
<dbReference type="OrthoDB" id="1558483at2759"/>
<dbReference type="Proteomes" id="UP000019116">
    <property type="component" value="Chloroplast"/>
</dbReference>
<dbReference type="ExpressionAtlas" id="P69677">
    <property type="expression patterns" value="baseline"/>
</dbReference>
<dbReference type="GO" id="GO:0009535">
    <property type="term" value="C:chloroplast thylakoid membrane"/>
    <property type="evidence" value="ECO:0007669"/>
    <property type="project" value="UniProtKB-SubCell"/>
</dbReference>
<dbReference type="GO" id="GO:0009539">
    <property type="term" value="C:photosystem II reaction center"/>
    <property type="evidence" value="ECO:0007669"/>
    <property type="project" value="InterPro"/>
</dbReference>
<dbReference type="GO" id="GO:0015979">
    <property type="term" value="P:photosynthesis"/>
    <property type="evidence" value="ECO:0007669"/>
    <property type="project" value="UniProtKB-UniRule"/>
</dbReference>
<dbReference type="HAMAP" id="MF_00808">
    <property type="entry name" value="PSII_PsbT"/>
    <property type="match status" value="1"/>
</dbReference>
<dbReference type="InterPro" id="IPR001743">
    <property type="entry name" value="PSII_PsbT"/>
</dbReference>
<dbReference type="InterPro" id="IPR037268">
    <property type="entry name" value="PSII_PsbT_sf"/>
</dbReference>
<dbReference type="PANTHER" id="PTHR36411">
    <property type="match status" value="1"/>
</dbReference>
<dbReference type="PANTHER" id="PTHR36411:SF2">
    <property type="entry name" value="PHOTOSYSTEM II REACTION CENTER PROTEIN T"/>
    <property type="match status" value="1"/>
</dbReference>
<dbReference type="Pfam" id="PF01405">
    <property type="entry name" value="PsbT"/>
    <property type="match status" value="1"/>
</dbReference>
<dbReference type="SUPFAM" id="SSF161029">
    <property type="entry name" value="Photosystem II reaction center protein T, PsbT"/>
    <property type="match status" value="1"/>
</dbReference>
<comment type="function">
    <text evidence="1">Found at the monomer-monomer interface of the photosystem II (PS II) dimer, plays a role in assembly and dimerization of PSII. PSII is a light-driven water plastoquinone oxidoreductase, using light energy to abstract electrons from H(2)O, generating a proton gradient subsequently used for ATP formation.</text>
</comment>
<comment type="subunit">
    <text evidence="1">PSII is composed of 1 copy each of membrane proteins PsbA, PsbB, PsbC, PsbD, PsbE, PsbF, PsbH, PsbI, PsbJ, PsbK, PsbL, PsbM, PsbT, PsbY, PsbZ, Psb30/Ycf12, at least 3 peripheral proteins of the oxygen-evolving complex and a large number of cofactors. It forms dimeric complexes.</text>
</comment>
<comment type="subcellular location">
    <subcellularLocation>
        <location evidence="1">Plastid</location>
        <location evidence="1">Chloroplast thylakoid membrane</location>
        <topology evidence="1">Single-pass membrane protein</topology>
    </subcellularLocation>
</comment>
<comment type="similarity">
    <text evidence="1">Belongs to the PsbT family.</text>
</comment>